<name>THID_RHIME</name>
<proteinExistence type="inferred from homology"/>
<sequence length="266" mass="27423">MTAIALSIAGSDSGGGAGIQADLKTFSALGVYGASVITAITAQNTRGVTAVEDVSAEIVSAQMDAVFSDLDVKAVKIGMVSRRETIAAIADGLRRFGKRAVVDPVMVATSGDALLRPDAVAALIEELLPLALVVTPNLAEAALMTGRAIAGDEAEMARQAEAIMRTGAHAVLVKGGHLKGQEATDLFFDGDTLVRLPAGRIETRNDHGTGCTLSAAIAAGLAKGVPLIEAVSAAKAYLHAAISAADRLEIGQGRGPVHHFHRWWKD</sequence>
<evidence type="ECO:0000250" key="1"/>
<evidence type="ECO:0000250" key="2">
    <source>
        <dbReference type="UniProtKB" id="P76422"/>
    </source>
</evidence>
<evidence type="ECO:0000305" key="3"/>
<reference key="1">
    <citation type="submission" date="1998-06" db="EMBL/GenBank/DDBJ databases">
        <title>Cloning of a DNA fragment related to salt tolerance in Sinorhizobium meliloti.</title>
        <authorList>
            <person name="Yang S."/>
            <person name="Chen X."/>
        </authorList>
    </citation>
    <scope>NUCLEOTIDE SEQUENCE [GENOMIC DNA]</scope>
    <source>
        <strain>042B</strain>
    </source>
</reference>
<reference key="2">
    <citation type="journal article" date="2001" name="Proc. Natl. Acad. Sci. U.S.A.">
        <title>The complete sequence of the 1,683-kb pSymB megaplasmid from the N2-fixing endosymbiont Sinorhizobium meliloti.</title>
        <authorList>
            <person name="Finan T.M."/>
            <person name="Weidner S."/>
            <person name="Wong K."/>
            <person name="Buhrmester J."/>
            <person name="Chain P."/>
            <person name="Vorhoelter F.J."/>
            <person name="Hernandez-Lucas I."/>
            <person name="Becker A."/>
            <person name="Cowie A."/>
            <person name="Gouzy J."/>
            <person name="Golding B."/>
            <person name="Puehler A."/>
        </authorList>
    </citation>
    <scope>NUCLEOTIDE SEQUENCE [LARGE SCALE GENOMIC DNA]</scope>
    <source>
        <strain>1021</strain>
    </source>
</reference>
<reference key="3">
    <citation type="journal article" date="2001" name="Science">
        <title>The composite genome of the legume symbiont Sinorhizobium meliloti.</title>
        <authorList>
            <person name="Galibert F."/>
            <person name="Finan T.M."/>
            <person name="Long S.R."/>
            <person name="Puehler A."/>
            <person name="Abola P."/>
            <person name="Ampe F."/>
            <person name="Barloy-Hubler F."/>
            <person name="Barnett M.J."/>
            <person name="Becker A."/>
            <person name="Boistard P."/>
            <person name="Bothe G."/>
            <person name="Boutry M."/>
            <person name="Bowser L."/>
            <person name="Buhrmester J."/>
            <person name="Cadieu E."/>
            <person name="Capela D."/>
            <person name="Chain P."/>
            <person name="Cowie A."/>
            <person name="Davis R.W."/>
            <person name="Dreano S."/>
            <person name="Federspiel N.A."/>
            <person name="Fisher R.F."/>
            <person name="Gloux S."/>
            <person name="Godrie T."/>
            <person name="Goffeau A."/>
            <person name="Golding B."/>
            <person name="Gouzy J."/>
            <person name="Gurjal M."/>
            <person name="Hernandez-Lucas I."/>
            <person name="Hong A."/>
            <person name="Huizar L."/>
            <person name="Hyman R.W."/>
            <person name="Jones T."/>
            <person name="Kahn D."/>
            <person name="Kahn M.L."/>
            <person name="Kalman S."/>
            <person name="Keating D.H."/>
            <person name="Kiss E."/>
            <person name="Komp C."/>
            <person name="Lelaure V."/>
            <person name="Masuy D."/>
            <person name="Palm C."/>
            <person name="Peck M.C."/>
            <person name="Pohl T.M."/>
            <person name="Portetelle D."/>
            <person name="Purnelle B."/>
            <person name="Ramsperger U."/>
            <person name="Surzycki R."/>
            <person name="Thebault P."/>
            <person name="Vandenbol M."/>
            <person name="Vorhoelter F.J."/>
            <person name="Weidner S."/>
            <person name="Wells D.H."/>
            <person name="Wong K."/>
            <person name="Yeh K.-C."/>
            <person name="Batut J."/>
        </authorList>
    </citation>
    <scope>NUCLEOTIDE SEQUENCE [LARGE SCALE GENOMIC DNA]</scope>
    <source>
        <strain>1021</strain>
    </source>
</reference>
<reference key="4">
    <citation type="journal article" date="1993" name="Mol. Gen. Genet.">
        <title>Identification and analysis of the Rhizobium meliloti exoAMONP genes involved in exopolysaccharide biosynthesis and mapping of promoters located on the exoHKLAMONP fragment.</title>
        <authorList>
            <person name="Becker A."/>
            <person name="Kleickmann A."/>
            <person name="Keller M."/>
            <person name="Arnold W."/>
            <person name="Puehler A."/>
        </authorList>
    </citation>
    <scope>NUCLEOTIDE SEQUENCE [GENOMIC DNA] OF 103-266</scope>
    <source>
        <strain>RCR2011 / SU47</strain>
    </source>
</reference>
<dbReference type="EC" id="2.7.1.49" evidence="2"/>
<dbReference type="EC" id="2.7.4.7" evidence="2"/>
<dbReference type="EMBL" id="AF070520">
    <property type="protein sequence ID" value="AAD46983.1"/>
    <property type="molecule type" value="Genomic_DNA"/>
</dbReference>
<dbReference type="EMBL" id="AL591985">
    <property type="protein sequence ID" value="CAC49487.1"/>
    <property type="molecule type" value="Genomic_DNA"/>
</dbReference>
<dbReference type="EMBL" id="Z22636">
    <property type="protein sequence ID" value="CAA80350.1"/>
    <property type="status" value="ALT_SEQ"/>
    <property type="molecule type" value="Genomic_DNA"/>
</dbReference>
<dbReference type="PIR" id="G95977">
    <property type="entry name" value="G95977"/>
</dbReference>
<dbReference type="PIR" id="S78110">
    <property type="entry name" value="S78110"/>
</dbReference>
<dbReference type="RefSeq" id="NP_437627.1">
    <property type="nucleotide sequence ID" value="NC_003078.1"/>
</dbReference>
<dbReference type="RefSeq" id="WP_010975923.1">
    <property type="nucleotide sequence ID" value="NC_003078.1"/>
</dbReference>
<dbReference type="SMR" id="P56904"/>
<dbReference type="EnsemblBacteria" id="CAC49487">
    <property type="protein sequence ID" value="CAC49487"/>
    <property type="gene ID" value="SM_b20962"/>
</dbReference>
<dbReference type="GeneID" id="89577813"/>
<dbReference type="KEGG" id="sme:SM_b20962"/>
<dbReference type="PATRIC" id="fig|266834.11.peg.6017"/>
<dbReference type="eggNOG" id="COG0351">
    <property type="taxonomic scope" value="Bacteria"/>
</dbReference>
<dbReference type="HOGENOM" id="CLU_020520_0_1_5"/>
<dbReference type="OrthoDB" id="9810880at2"/>
<dbReference type="UniPathway" id="UPA00060">
    <property type="reaction ID" value="UER00137"/>
</dbReference>
<dbReference type="UniPathway" id="UPA00060">
    <property type="reaction ID" value="UER00138"/>
</dbReference>
<dbReference type="Proteomes" id="UP000001976">
    <property type="component" value="Plasmid pSymB"/>
</dbReference>
<dbReference type="GO" id="GO:0005829">
    <property type="term" value="C:cytosol"/>
    <property type="evidence" value="ECO:0007669"/>
    <property type="project" value="TreeGrafter"/>
</dbReference>
<dbReference type="GO" id="GO:0005524">
    <property type="term" value="F:ATP binding"/>
    <property type="evidence" value="ECO:0007669"/>
    <property type="project" value="UniProtKB-KW"/>
</dbReference>
<dbReference type="GO" id="GO:0008902">
    <property type="term" value="F:hydroxymethylpyrimidine kinase activity"/>
    <property type="evidence" value="ECO:0007669"/>
    <property type="project" value="UniProtKB-EC"/>
</dbReference>
<dbReference type="GO" id="GO:0008972">
    <property type="term" value="F:phosphomethylpyrimidine kinase activity"/>
    <property type="evidence" value="ECO:0007669"/>
    <property type="project" value="UniProtKB-EC"/>
</dbReference>
<dbReference type="GO" id="GO:0009228">
    <property type="term" value="P:thiamine biosynthetic process"/>
    <property type="evidence" value="ECO:0007669"/>
    <property type="project" value="UniProtKB-KW"/>
</dbReference>
<dbReference type="GO" id="GO:0009229">
    <property type="term" value="P:thiamine diphosphate biosynthetic process"/>
    <property type="evidence" value="ECO:0007669"/>
    <property type="project" value="UniProtKB-UniPathway"/>
</dbReference>
<dbReference type="CDD" id="cd01169">
    <property type="entry name" value="HMPP_kinase"/>
    <property type="match status" value="1"/>
</dbReference>
<dbReference type="FunFam" id="3.40.1190.20:FF:000003">
    <property type="entry name" value="Phosphomethylpyrimidine kinase ThiD"/>
    <property type="match status" value="1"/>
</dbReference>
<dbReference type="Gene3D" id="3.40.1190.20">
    <property type="match status" value="1"/>
</dbReference>
<dbReference type="InterPro" id="IPR004399">
    <property type="entry name" value="HMP/HMP-P_kinase_dom"/>
</dbReference>
<dbReference type="InterPro" id="IPR013749">
    <property type="entry name" value="PM/HMP-P_kinase-1"/>
</dbReference>
<dbReference type="InterPro" id="IPR029056">
    <property type="entry name" value="Ribokinase-like"/>
</dbReference>
<dbReference type="NCBIfam" id="TIGR00097">
    <property type="entry name" value="HMP-P_kinase"/>
    <property type="match status" value="1"/>
</dbReference>
<dbReference type="PANTHER" id="PTHR20858:SF17">
    <property type="entry name" value="HYDROXYMETHYLPYRIMIDINE_PHOSPHOMETHYLPYRIMIDINE KINASE THI20-RELATED"/>
    <property type="match status" value="1"/>
</dbReference>
<dbReference type="PANTHER" id="PTHR20858">
    <property type="entry name" value="PHOSPHOMETHYLPYRIMIDINE KINASE"/>
    <property type="match status" value="1"/>
</dbReference>
<dbReference type="Pfam" id="PF08543">
    <property type="entry name" value="Phos_pyr_kin"/>
    <property type="match status" value="1"/>
</dbReference>
<dbReference type="SUPFAM" id="SSF53613">
    <property type="entry name" value="Ribokinase-like"/>
    <property type="match status" value="1"/>
</dbReference>
<geneLocation type="plasmid">
    <name>pSymB</name>
    <name>megaplasmid 2</name>
</geneLocation>
<accession>P56904</accession>
<accession>Q52914</accession>
<protein>
    <recommendedName>
        <fullName>Hydroxymethylpyrimidine/phosphomethylpyrimidine kinase</fullName>
        <ecNumber evidence="2">2.7.1.49</ecNumber>
        <ecNumber evidence="2">2.7.4.7</ecNumber>
    </recommendedName>
    <alternativeName>
        <fullName>Hydroxymethylpyrimidine kinase</fullName>
        <shortName>HMP kinase</shortName>
    </alternativeName>
    <alternativeName>
        <fullName>Hydroxymethylpyrimidine phosphate kinase</fullName>
        <shortName>HMP-P kinase</shortName>
        <shortName>HMP-phosphate kinase</shortName>
        <shortName>HMPP kinase</shortName>
    </alternativeName>
</protein>
<gene>
    <name type="primary">thiD</name>
    <name type="ordered locus">RB1087</name>
    <name type="ORF">SMb20962</name>
</gene>
<organism>
    <name type="scientific">Rhizobium meliloti (strain 1021)</name>
    <name type="common">Ensifer meliloti</name>
    <name type="synonym">Sinorhizobium meliloti</name>
    <dbReference type="NCBI Taxonomy" id="266834"/>
    <lineage>
        <taxon>Bacteria</taxon>
        <taxon>Pseudomonadati</taxon>
        <taxon>Pseudomonadota</taxon>
        <taxon>Alphaproteobacteria</taxon>
        <taxon>Hyphomicrobiales</taxon>
        <taxon>Rhizobiaceae</taxon>
        <taxon>Sinorhizobium/Ensifer group</taxon>
        <taxon>Sinorhizobium</taxon>
    </lineage>
</organism>
<feature type="chain" id="PRO_0000192025" description="Hydroxymethylpyrimidine/phosphomethylpyrimidine kinase">
    <location>
        <begin position="1"/>
        <end position="266"/>
    </location>
</feature>
<feature type="binding site" evidence="1">
    <location>
        <position position="43"/>
    </location>
    <ligand>
        <name>4-amino-5-hydroxymethyl-2-methylpyrimidine</name>
        <dbReference type="ChEBI" id="CHEBI:16892"/>
    </ligand>
</feature>
<feature type="sequence conflict" description="In Ref. 1; AAD46983." evidence="3" ref="1">
    <original>KR</original>
    <variation>RL</variation>
    <location>
        <begin position="98"/>
        <end position="99"/>
    </location>
</feature>
<feature type="sequence conflict" description="In Ref. 1; AAD46983." evidence="3" ref="1">
    <original>L</original>
    <variation>F</variation>
    <location>
        <position position="115"/>
    </location>
</feature>
<feature type="sequence conflict" description="In Ref. 1; AAD46983." evidence="3" ref="1">
    <original>V</original>
    <variation>A</variation>
    <location>
        <position position="134"/>
    </location>
</feature>
<comment type="function">
    <text evidence="2">Catalyzes the phosphorylation of hydroxymethylpyrimidine phosphate (HMP-P) to HMP-PP, and of HMP to HMP-P.</text>
</comment>
<comment type="catalytic activity">
    <reaction evidence="2">
        <text>4-amino-5-hydroxymethyl-2-methylpyrimidine + ATP = 4-amino-2-methyl-5-(phosphooxymethyl)pyrimidine + ADP + H(+)</text>
        <dbReference type="Rhea" id="RHEA:23096"/>
        <dbReference type="ChEBI" id="CHEBI:15378"/>
        <dbReference type="ChEBI" id="CHEBI:16892"/>
        <dbReference type="ChEBI" id="CHEBI:30616"/>
        <dbReference type="ChEBI" id="CHEBI:58354"/>
        <dbReference type="ChEBI" id="CHEBI:456216"/>
        <dbReference type="EC" id="2.7.1.49"/>
    </reaction>
</comment>
<comment type="catalytic activity">
    <reaction evidence="2">
        <text>4-amino-2-methyl-5-(phosphooxymethyl)pyrimidine + ATP = 4-amino-2-methyl-5-(diphosphooxymethyl)pyrimidine + ADP</text>
        <dbReference type="Rhea" id="RHEA:19893"/>
        <dbReference type="ChEBI" id="CHEBI:30616"/>
        <dbReference type="ChEBI" id="CHEBI:57841"/>
        <dbReference type="ChEBI" id="CHEBI:58354"/>
        <dbReference type="ChEBI" id="CHEBI:456216"/>
        <dbReference type="EC" id="2.7.4.7"/>
    </reaction>
</comment>
<comment type="pathway">
    <text>Cofactor biosynthesis; thiamine diphosphate biosynthesis; 4-amino-2-methyl-5-diphosphomethylpyrimidine from 5-amino-1-(5-phospho-D-ribosyl)imidazole: step 2/3.</text>
</comment>
<comment type="pathway">
    <text>Cofactor biosynthesis; thiamine diphosphate biosynthesis; 4-amino-2-methyl-5-diphosphomethylpyrimidine from 5-amino-1-(5-phospho-D-ribosyl)imidazole: step 3/3.</text>
</comment>
<comment type="similarity">
    <text evidence="3">Belongs to the ThiD family.</text>
</comment>
<keyword id="KW-0067">ATP-binding</keyword>
<keyword id="KW-0418">Kinase</keyword>
<keyword id="KW-0547">Nucleotide-binding</keyword>
<keyword id="KW-0614">Plasmid</keyword>
<keyword id="KW-1185">Reference proteome</keyword>
<keyword id="KW-0784">Thiamine biosynthesis</keyword>
<keyword id="KW-0808">Transferase</keyword>